<organism>
    <name type="scientific">Escherichia coli (strain K12)</name>
    <dbReference type="NCBI Taxonomy" id="83333"/>
    <lineage>
        <taxon>Bacteria</taxon>
        <taxon>Pseudomonadati</taxon>
        <taxon>Pseudomonadota</taxon>
        <taxon>Gammaproteobacteria</taxon>
        <taxon>Enterobacterales</taxon>
        <taxon>Enterobacteriaceae</taxon>
        <taxon>Escherichia</taxon>
    </lineage>
</organism>
<dbReference type="EMBL" id="U18997">
    <property type="protein sequence ID" value="AAA58072.1"/>
    <property type="status" value="ALT_FRAME"/>
    <property type="molecule type" value="Genomic_DNA"/>
</dbReference>
<dbReference type="EMBL" id="U00096">
    <property type="status" value="NOT_ANNOTATED_CDS"/>
    <property type="molecule type" value="Genomic_DNA"/>
</dbReference>
<dbReference type="EMBL" id="AP009048">
    <property type="protein sequence ID" value="BAE77309.1"/>
    <property type="status" value="ALT_FRAME"/>
    <property type="molecule type" value="Genomic_DNA"/>
</dbReference>
<dbReference type="PIR" id="F65119">
    <property type="entry name" value="F65119"/>
</dbReference>
<dbReference type="BioGRID" id="4263167">
    <property type="interactions" value="6"/>
</dbReference>
<dbReference type="ComplexPortal" id="CPX-4450">
    <property type="entry name" value="Putative amino acid ABC transporter complex"/>
</dbReference>
<dbReference type="FunCoup" id="P45766">
    <property type="interactions" value="8"/>
</dbReference>
<dbReference type="IntAct" id="P45766">
    <property type="interactions" value="1"/>
</dbReference>
<dbReference type="TCDB" id="3.A.1.3.26">
    <property type="family name" value="the atp-binding cassette (abc) superfamily"/>
</dbReference>
<dbReference type="KEGG" id="ecj:JW3236"/>
<dbReference type="EchoBASE" id="EB2683"/>
<dbReference type="eggNOG" id="COG0834">
    <property type="taxonomic scope" value="Bacteria"/>
</dbReference>
<dbReference type="HOGENOM" id="CLU_019602_3_2_6"/>
<dbReference type="InParanoid" id="P45766"/>
<dbReference type="PhylomeDB" id="P45766"/>
<dbReference type="Proteomes" id="UP000000625">
    <property type="component" value="Chromosome"/>
</dbReference>
<dbReference type="GO" id="GO:0055052">
    <property type="term" value="C:ATP-binding cassette (ABC) transporter complex, substrate-binding subunit-containing"/>
    <property type="evidence" value="ECO:0000303"/>
    <property type="project" value="ComplexPortal"/>
</dbReference>
<dbReference type="GO" id="GO:0016020">
    <property type="term" value="C:membrane"/>
    <property type="evidence" value="ECO:0000303"/>
    <property type="project" value="ComplexPortal"/>
</dbReference>
<dbReference type="GO" id="GO:0030288">
    <property type="term" value="C:outer membrane-bounded periplasmic space"/>
    <property type="evidence" value="ECO:0007669"/>
    <property type="project" value="UniProtKB-ARBA"/>
</dbReference>
<dbReference type="GO" id="GO:0006865">
    <property type="term" value="P:amino acid transport"/>
    <property type="evidence" value="ECO:0000318"/>
    <property type="project" value="GO_Central"/>
</dbReference>
<dbReference type="GO" id="GO:0015833">
    <property type="term" value="P:peptide transport"/>
    <property type="evidence" value="ECO:0000303"/>
    <property type="project" value="ComplexPortal"/>
</dbReference>
<dbReference type="CDD" id="cd13692">
    <property type="entry name" value="PBP2_BztA"/>
    <property type="match status" value="1"/>
</dbReference>
<dbReference type="Gene3D" id="3.40.190.10">
    <property type="entry name" value="Periplasmic binding protein-like II"/>
    <property type="match status" value="2"/>
</dbReference>
<dbReference type="InterPro" id="IPR051455">
    <property type="entry name" value="Bact_solute-bind_prot3"/>
</dbReference>
<dbReference type="InterPro" id="IPR018313">
    <property type="entry name" value="SBP_3_CS"/>
</dbReference>
<dbReference type="InterPro" id="IPR001638">
    <property type="entry name" value="Solute-binding_3/MltF_N"/>
</dbReference>
<dbReference type="PANTHER" id="PTHR30085">
    <property type="entry name" value="AMINO ACID ABC TRANSPORTER PERMEASE"/>
    <property type="match status" value="1"/>
</dbReference>
<dbReference type="PANTHER" id="PTHR30085:SF7">
    <property type="entry name" value="AMINO-ACID ABC TRANSPORTER-BINDING PROTEIN YHDW-RELATED"/>
    <property type="match status" value="1"/>
</dbReference>
<dbReference type="Pfam" id="PF00497">
    <property type="entry name" value="SBP_bac_3"/>
    <property type="match status" value="1"/>
</dbReference>
<dbReference type="SMART" id="SM00062">
    <property type="entry name" value="PBPb"/>
    <property type="match status" value="1"/>
</dbReference>
<dbReference type="SUPFAM" id="SSF53850">
    <property type="entry name" value="Periplasmic binding protein-like II"/>
    <property type="match status" value="1"/>
</dbReference>
<dbReference type="PROSITE" id="PS01039">
    <property type="entry name" value="SBP_BACTERIAL_3"/>
    <property type="match status" value="1"/>
</dbReference>
<protein>
    <recommendedName>
        <fullName>Putative amino-acid ABC transporter-binding protein YhdW</fullName>
    </recommendedName>
</protein>
<comment type="function">
    <text>Probably part of the binding-protein-dependent transport system YdhWXYZ for an amino acid.</text>
</comment>
<comment type="subcellular location">
    <subcellularLocation>
        <location evidence="2">Periplasm</location>
    </subcellularLocation>
</comment>
<comment type="similarity">
    <text evidence="2">Belongs to the bacterial solute-binding protein 3 family.</text>
</comment>
<comment type="sequence caution" evidence="2">
    <conflict type="frameshift">
        <sequence resource="EMBL-CDS" id="AAA58072"/>
    </conflict>
</comment>
<comment type="sequence caution" evidence="2">
    <conflict type="frameshift">
        <sequence resource="EMBL" id="U00096"/>
    </conflict>
</comment>
<evidence type="ECO:0000255" key="1"/>
<evidence type="ECO:0000305" key="2"/>
<gene>
    <name type="primary">yhdW</name>
    <name type="ordered locus">b3268</name>
    <name type="ordered locus">JW3236</name>
</gene>
<accession>P45766</accession>
<accession>Q2M8U7</accession>
<name>YHDW_ECOLI</name>
<sequence length="341" mass="37021">MKKMMIATLAAASVLLAVANQAXAGATLDAVQKKGFVQCGISDGLPGFSYADADGKFSGIDVDICRGVAAAVFGDDTKVKYTPLTAKERFTALQSGEVDLLSRNTTWTSSRDAGMGMAFTGVTYYDGIGFLTHDKAGLKSAKELDGATVCIQAGTDTELNVADYFKANNMKYTPVTFDRSDESAKALESGRCDTLASDQSQLYALRIKLSNPAEWIVLPEVISKEPLGPVVRRGDDEWFSIVRWTLFAMLNAEEMGINSQNVDEKAANPATPDMAHLLGKEGDYGKDLKLDNKWAYNIIKQVGNYSEIFERNVGSESPLKIKRGQNNLWNNGGIQYAPPVR</sequence>
<reference key="1">
    <citation type="journal article" date="1997" name="Science">
        <title>The complete genome sequence of Escherichia coli K-12.</title>
        <authorList>
            <person name="Blattner F.R."/>
            <person name="Plunkett G. III"/>
            <person name="Bloch C.A."/>
            <person name="Perna N.T."/>
            <person name="Burland V."/>
            <person name="Riley M."/>
            <person name="Collado-Vides J."/>
            <person name="Glasner J.D."/>
            <person name="Rode C.K."/>
            <person name="Mayhew G.F."/>
            <person name="Gregor J."/>
            <person name="Davis N.W."/>
            <person name="Kirkpatrick H.A."/>
            <person name="Goeden M.A."/>
            <person name="Rose D.J."/>
            <person name="Mau B."/>
            <person name="Shao Y."/>
        </authorList>
    </citation>
    <scope>NUCLEOTIDE SEQUENCE [LARGE SCALE GENOMIC DNA]</scope>
    <source>
        <strain>K12 / MG1655 / ATCC 47076</strain>
    </source>
</reference>
<reference key="2">
    <citation type="journal article" date="2006" name="Mol. Syst. Biol.">
        <title>Highly accurate genome sequences of Escherichia coli K-12 strains MG1655 and W3110.</title>
        <authorList>
            <person name="Hayashi K."/>
            <person name="Morooka N."/>
            <person name="Yamamoto Y."/>
            <person name="Fujita K."/>
            <person name="Isono K."/>
            <person name="Choi S."/>
            <person name="Ohtsubo E."/>
            <person name="Baba T."/>
            <person name="Wanner B.L."/>
            <person name="Mori H."/>
            <person name="Horiuchi T."/>
        </authorList>
    </citation>
    <scope>NUCLEOTIDE SEQUENCE [LARGE SCALE GENOMIC DNA]</scope>
    <source>
        <strain>K12 / W3110 / ATCC 27325 / DSM 5911</strain>
    </source>
</reference>
<reference key="3">
    <citation type="journal article" date="1999" name="Electrophoresis">
        <title>Enrichment of low abundance proteins of Escherichia coli by hydroxyapatite chromatography.</title>
        <authorList>
            <person name="Fountoulakis M."/>
            <person name="Takacs M.-F."/>
            <person name="Berndt P."/>
            <person name="Langen H."/>
            <person name="Takacs B."/>
        </authorList>
    </citation>
    <scope>IDENTIFICATION BY MASS SPECTROMETRY</scope>
    <source>
        <strain>B / BL21</strain>
    </source>
</reference>
<reference key="4">
    <citation type="unpublished observations" date="2000-01">
        <authorList>
            <person name="Rudd K.E."/>
        </authorList>
    </citation>
    <scope>CONCEPTUAL TRANSLATION</scope>
</reference>
<proteinExistence type="evidence at protein level"/>
<keyword id="KW-0029">Amino-acid transport</keyword>
<keyword id="KW-0574">Periplasm</keyword>
<keyword id="KW-1185">Reference proteome</keyword>
<keyword id="KW-0732">Signal</keyword>
<keyword id="KW-0813">Transport</keyword>
<feature type="signal peptide" evidence="1">
    <location>
        <begin position="1"/>
        <end position="19"/>
    </location>
</feature>
<feature type="chain" id="PRO_0000031774" description="Putative amino-acid ABC transporter-binding protein YhdW">
    <location>
        <begin position="20"/>
        <end position="341"/>
    </location>
</feature>